<proteinExistence type="inferred from homology"/>
<organism>
    <name type="scientific">Bacillus cereus (strain Q1)</name>
    <dbReference type="NCBI Taxonomy" id="361100"/>
    <lineage>
        <taxon>Bacteria</taxon>
        <taxon>Bacillati</taxon>
        <taxon>Bacillota</taxon>
        <taxon>Bacilli</taxon>
        <taxon>Bacillales</taxon>
        <taxon>Bacillaceae</taxon>
        <taxon>Bacillus</taxon>
        <taxon>Bacillus cereus group</taxon>
    </lineage>
</organism>
<reference key="1">
    <citation type="journal article" date="2009" name="J. Bacteriol.">
        <title>Complete genome sequence of the extremophilic Bacillus cereus strain Q1 with industrial applications.</title>
        <authorList>
            <person name="Xiong Z."/>
            <person name="Jiang Y."/>
            <person name="Qi D."/>
            <person name="Lu H."/>
            <person name="Yang F."/>
            <person name="Yang J."/>
            <person name="Chen L."/>
            <person name="Sun L."/>
            <person name="Xu X."/>
            <person name="Xue Y."/>
            <person name="Zhu Y."/>
            <person name="Jin Q."/>
        </authorList>
    </citation>
    <scope>NUCLEOTIDE SEQUENCE [LARGE SCALE GENOMIC DNA]</scope>
    <source>
        <strain>Q1</strain>
    </source>
</reference>
<keyword id="KW-1003">Cell membrane</keyword>
<keyword id="KW-0407">Ion channel</keyword>
<keyword id="KW-0406">Ion transport</keyword>
<keyword id="KW-0472">Membrane</keyword>
<keyword id="KW-0812">Transmembrane</keyword>
<keyword id="KW-1133">Transmembrane helix</keyword>
<keyword id="KW-0813">Transport</keyword>
<comment type="function">
    <text evidence="1">Channel that opens in response to stretch forces in the membrane lipid bilayer. May participate in the regulation of osmotic pressure changes within the cell.</text>
</comment>
<comment type="subunit">
    <text evidence="1">Homopentamer.</text>
</comment>
<comment type="subcellular location">
    <subcellularLocation>
        <location evidence="1">Cell membrane</location>
        <topology evidence="1">Multi-pass membrane protein</topology>
    </subcellularLocation>
</comment>
<comment type="similarity">
    <text evidence="1">Belongs to the MscL family.</text>
</comment>
<protein>
    <recommendedName>
        <fullName evidence="1">Large-conductance mechanosensitive channel</fullName>
    </recommendedName>
</protein>
<sequence length="133" mass="14882">MWNEFKKFAFKGNVVDLAVGVVIGAAFGKIVSSLVKDVITPLLGMVLGGVDFTDLKLTFGKSSIMYGNFIQTIFDFLIIAAAIFMFVKVFNKLTSRKEEEEKEEEIPEPTKEEVLLGEIRDLLKQQNSSKDRA</sequence>
<name>MSCL_BACCQ</name>
<accession>B9J176</accession>
<feature type="chain" id="PRO_1000191354" description="Large-conductance mechanosensitive channel">
    <location>
        <begin position="1"/>
        <end position="133"/>
    </location>
</feature>
<feature type="transmembrane region" description="Helical" evidence="1">
    <location>
        <begin position="14"/>
        <end position="34"/>
    </location>
</feature>
<feature type="transmembrane region" description="Helical" evidence="1">
    <location>
        <begin position="67"/>
        <end position="87"/>
    </location>
</feature>
<dbReference type="EMBL" id="CP000227">
    <property type="protein sequence ID" value="ACM14914.1"/>
    <property type="molecule type" value="Genomic_DNA"/>
</dbReference>
<dbReference type="SMR" id="B9J176"/>
<dbReference type="KEGG" id="bcq:BCQ_4488"/>
<dbReference type="HOGENOM" id="CLU_095787_0_0_9"/>
<dbReference type="Proteomes" id="UP000000441">
    <property type="component" value="Chromosome"/>
</dbReference>
<dbReference type="GO" id="GO:0005886">
    <property type="term" value="C:plasma membrane"/>
    <property type="evidence" value="ECO:0007669"/>
    <property type="project" value="UniProtKB-SubCell"/>
</dbReference>
<dbReference type="GO" id="GO:0008381">
    <property type="term" value="F:mechanosensitive monoatomic ion channel activity"/>
    <property type="evidence" value="ECO:0007669"/>
    <property type="project" value="UniProtKB-UniRule"/>
</dbReference>
<dbReference type="FunFam" id="1.10.1200.120:FF:000001">
    <property type="entry name" value="Large-conductance mechanosensitive channel"/>
    <property type="match status" value="1"/>
</dbReference>
<dbReference type="Gene3D" id="1.10.1200.120">
    <property type="entry name" value="Large-conductance mechanosensitive channel, MscL, domain 1"/>
    <property type="match status" value="1"/>
</dbReference>
<dbReference type="HAMAP" id="MF_00115">
    <property type="entry name" value="MscL"/>
    <property type="match status" value="1"/>
</dbReference>
<dbReference type="InterPro" id="IPR019823">
    <property type="entry name" value="Mechanosensitive_channel_CS"/>
</dbReference>
<dbReference type="InterPro" id="IPR001185">
    <property type="entry name" value="MS_channel"/>
</dbReference>
<dbReference type="InterPro" id="IPR037673">
    <property type="entry name" value="MSC/AndL"/>
</dbReference>
<dbReference type="InterPro" id="IPR036019">
    <property type="entry name" value="MscL_channel"/>
</dbReference>
<dbReference type="NCBIfam" id="TIGR00220">
    <property type="entry name" value="mscL"/>
    <property type="match status" value="1"/>
</dbReference>
<dbReference type="NCBIfam" id="NF001843">
    <property type="entry name" value="PRK00567.1-4"/>
    <property type="match status" value="1"/>
</dbReference>
<dbReference type="NCBIfam" id="NF010560">
    <property type="entry name" value="PRK13955.1"/>
    <property type="match status" value="1"/>
</dbReference>
<dbReference type="PANTHER" id="PTHR30266:SF2">
    <property type="entry name" value="LARGE-CONDUCTANCE MECHANOSENSITIVE CHANNEL"/>
    <property type="match status" value="1"/>
</dbReference>
<dbReference type="PANTHER" id="PTHR30266">
    <property type="entry name" value="MECHANOSENSITIVE CHANNEL MSCL"/>
    <property type="match status" value="1"/>
</dbReference>
<dbReference type="Pfam" id="PF01741">
    <property type="entry name" value="MscL"/>
    <property type="match status" value="1"/>
</dbReference>
<dbReference type="PRINTS" id="PR01264">
    <property type="entry name" value="MECHCHANNEL"/>
</dbReference>
<dbReference type="SUPFAM" id="SSF81330">
    <property type="entry name" value="Gated mechanosensitive channel"/>
    <property type="match status" value="1"/>
</dbReference>
<dbReference type="PROSITE" id="PS01327">
    <property type="entry name" value="MSCL"/>
    <property type="match status" value="1"/>
</dbReference>
<evidence type="ECO:0000255" key="1">
    <source>
        <dbReference type="HAMAP-Rule" id="MF_00115"/>
    </source>
</evidence>
<gene>
    <name evidence="1" type="primary">mscL</name>
    <name type="ordered locus">BCQ_4488</name>
</gene>